<evidence type="ECO:0000250" key="1"/>
<evidence type="ECO:0000250" key="2">
    <source>
        <dbReference type="UniProtKB" id="Q96F86"/>
    </source>
</evidence>
<evidence type="ECO:0000255" key="3">
    <source>
        <dbReference type="PROSITE-ProRule" id="PRU00719"/>
    </source>
</evidence>
<evidence type="ECO:0000255" key="4">
    <source>
        <dbReference type="PROSITE-ProRule" id="PRU00845"/>
    </source>
</evidence>
<evidence type="ECO:0000255" key="5">
    <source>
        <dbReference type="PROSITE-ProRule" id="PRU01346"/>
    </source>
</evidence>
<evidence type="ECO:0000256" key="6">
    <source>
        <dbReference type="SAM" id="MobiDB-lite"/>
    </source>
</evidence>
<evidence type="ECO:0000269" key="7">
    <source>
    </source>
</evidence>
<evidence type="ECO:0000305" key="8"/>
<dbReference type="EMBL" id="BC095641">
    <property type="protein sequence ID" value="AAH95641.1"/>
    <property type="molecule type" value="mRNA"/>
</dbReference>
<dbReference type="SMR" id="Q502M5"/>
<dbReference type="FunCoup" id="Q502M5">
    <property type="interactions" value="1037"/>
</dbReference>
<dbReference type="STRING" id="7955.ENSDARP00000067372"/>
<dbReference type="iPTMnet" id="Q502M5"/>
<dbReference type="PaxDb" id="7955-ENSDARP00000106420"/>
<dbReference type="AGR" id="ZFIN:ZDB-GENE-050522-287"/>
<dbReference type="ZFIN" id="ZDB-GENE-050522-287">
    <property type="gene designation" value="edc3"/>
</dbReference>
<dbReference type="eggNOG" id="KOG2585">
    <property type="taxonomic scope" value="Eukaryota"/>
</dbReference>
<dbReference type="InParanoid" id="Q502M5"/>
<dbReference type="PhylomeDB" id="Q502M5"/>
<dbReference type="Reactome" id="R-DRE-430039">
    <property type="pathway name" value="mRNA decay by 5' to 3' exoribonuclease"/>
</dbReference>
<dbReference type="PRO" id="PR:Q502M5"/>
<dbReference type="Proteomes" id="UP000000437">
    <property type="component" value="Unplaced"/>
</dbReference>
<dbReference type="GO" id="GO:0000932">
    <property type="term" value="C:P-body"/>
    <property type="evidence" value="ECO:0000318"/>
    <property type="project" value="GO_Central"/>
</dbReference>
<dbReference type="GO" id="GO:0003729">
    <property type="term" value="F:mRNA binding"/>
    <property type="evidence" value="ECO:0000318"/>
    <property type="project" value="GO_Central"/>
</dbReference>
<dbReference type="GO" id="GO:0031087">
    <property type="term" value="P:deadenylation-independent decapping of nuclear-transcribed mRNA"/>
    <property type="evidence" value="ECO:0000318"/>
    <property type="project" value="GO_Central"/>
</dbReference>
<dbReference type="GO" id="GO:0033962">
    <property type="term" value="P:P-body assembly"/>
    <property type="evidence" value="ECO:0000318"/>
    <property type="project" value="GO_Central"/>
</dbReference>
<dbReference type="CDD" id="cd01737">
    <property type="entry name" value="LSm16_N"/>
    <property type="match status" value="1"/>
</dbReference>
<dbReference type="FunFam" id="2.30.30.100:FF:000026">
    <property type="entry name" value="Enhancer of mRNA-decapping protein 3"/>
    <property type="match status" value="1"/>
</dbReference>
<dbReference type="FunFam" id="3.40.50.10260:FF:000001">
    <property type="entry name" value="Enhancer of mRNA-decapping protein 3"/>
    <property type="match status" value="1"/>
</dbReference>
<dbReference type="Gene3D" id="2.30.30.100">
    <property type="match status" value="1"/>
</dbReference>
<dbReference type="Gene3D" id="3.40.50.10260">
    <property type="entry name" value="YjeF N-terminal domain"/>
    <property type="match status" value="1"/>
</dbReference>
<dbReference type="InterPro" id="IPR025762">
    <property type="entry name" value="DFDF"/>
</dbReference>
<dbReference type="InterPro" id="IPR019050">
    <property type="entry name" value="FDF_dom"/>
</dbReference>
<dbReference type="InterPro" id="IPR025609">
    <property type="entry name" value="Lsm14-like_N"/>
</dbReference>
<dbReference type="InterPro" id="IPR034107">
    <property type="entry name" value="Lsm16_N"/>
</dbReference>
<dbReference type="InterPro" id="IPR047575">
    <property type="entry name" value="Sm"/>
</dbReference>
<dbReference type="InterPro" id="IPR004443">
    <property type="entry name" value="YjeF_N_dom"/>
</dbReference>
<dbReference type="InterPro" id="IPR036652">
    <property type="entry name" value="YjeF_N_dom_sf"/>
</dbReference>
<dbReference type="PANTHER" id="PTHR13612">
    <property type="entry name" value="ENHANCER OF MRNA-DECAPPING PROTEIN 3"/>
    <property type="match status" value="1"/>
</dbReference>
<dbReference type="PANTHER" id="PTHR13612:SF0">
    <property type="entry name" value="ENHANCER OF MRNA-DECAPPING PROTEIN 3"/>
    <property type="match status" value="1"/>
</dbReference>
<dbReference type="Pfam" id="PF16598">
    <property type="entry name" value="Edc3_linker"/>
    <property type="match status" value="1"/>
</dbReference>
<dbReference type="Pfam" id="PF09532">
    <property type="entry name" value="FDF"/>
    <property type="match status" value="1"/>
</dbReference>
<dbReference type="Pfam" id="PF12701">
    <property type="entry name" value="LSM14"/>
    <property type="match status" value="1"/>
</dbReference>
<dbReference type="Pfam" id="PF03853">
    <property type="entry name" value="YjeF_N"/>
    <property type="match status" value="1"/>
</dbReference>
<dbReference type="SMART" id="SM01199">
    <property type="entry name" value="FDF"/>
    <property type="match status" value="1"/>
</dbReference>
<dbReference type="SMART" id="SM01271">
    <property type="entry name" value="LSM14"/>
    <property type="match status" value="1"/>
</dbReference>
<dbReference type="SUPFAM" id="SSF64153">
    <property type="entry name" value="YjeF N-terminal domain-like"/>
    <property type="match status" value="1"/>
</dbReference>
<dbReference type="PROSITE" id="PS51512">
    <property type="entry name" value="DFDF"/>
    <property type="match status" value="1"/>
</dbReference>
<dbReference type="PROSITE" id="PS52002">
    <property type="entry name" value="SM"/>
    <property type="match status" value="1"/>
</dbReference>
<dbReference type="PROSITE" id="PS51385">
    <property type="entry name" value="YJEF_N"/>
    <property type="match status" value="1"/>
</dbReference>
<name>EDC3_DANRE</name>
<keyword id="KW-0963">Cytoplasm</keyword>
<keyword id="KW-0597">Phosphoprotein</keyword>
<keyword id="KW-1185">Reference proteome</keyword>
<keyword id="KW-0694">RNA-binding</keyword>
<protein>
    <recommendedName>
        <fullName>Enhancer of mRNA-decapping protein 3</fullName>
    </recommendedName>
    <alternativeName>
        <fullName>LSM16 protein homolog</fullName>
    </alternativeName>
    <alternativeName>
        <fullName>YjeF domain-containing protein 1</fullName>
    </alternativeName>
</protein>
<accession>Q502M5</accession>
<feature type="chain" id="PRO_0000119059" description="Enhancer of mRNA-decapping protein 3">
    <location>
        <begin position="1"/>
        <end position="507"/>
    </location>
</feature>
<feature type="domain" description="Sm" evidence="5">
    <location>
        <begin position="1"/>
        <end position="68"/>
    </location>
</feature>
<feature type="domain" description="DFDF" evidence="4">
    <location>
        <begin position="189"/>
        <end position="225"/>
    </location>
</feature>
<feature type="domain" description="YjeF N-terminal" evidence="3">
    <location>
        <begin position="282"/>
        <end position="486"/>
    </location>
</feature>
<feature type="region of interest" description="Required for P-body targeting and interaction with DCP1A" evidence="1">
    <location>
        <begin position="1"/>
        <end position="77"/>
    </location>
</feature>
<feature type="region of interest" description="Disordered" evidence="6">
    <location>
        <begin position="75"/>
        <end position="113"/>
    </location>
</feature>
<feature type="region of interest" description="Disordered" evidence="6">
    <location>
        <begin position="154"/>
        <end position="182"/>
    </location>
</feature>
<feature type="region of interest" description="Required for interaction with DDX6" evidence="1">
    <location>
        <begin position="188"/>
        <end position="295"/>
    </location>
</feature>
<feature type="region of interest" description="Disordered" evidence="6">
    <location>
        <begin position="220"/>
        <end position="248"/>
    </location>
</feature>
<feature type="compositionally biased region" description="Polar residues" evidence="6">
    <location>
        <begin position="75"/>
        <end position="87"/>
    </location>
</feature>
<feature type="compositionally biased region" description="Polar residues" evidence="6">
    <location>
        <begin position="157"/>
        <end position="170"/>
    </location>
</feature>
<feature type="modified residue" description="Phosphoserine" evidence="7">
    <location>
        <position position="128"/>
    </location>
</feature>
<organism>
    <name type="scientific">Danio rerio</name>
    <name type="common">Zebrafish</name>
    <name type="synonym">Brachydanio rerio</name>
    <dbReference type="NCBI Taxonomy" id="7955"/>
    <lineage>
        <taxon>Eukaryota</taxon>
        <taxon>Metazoa</taxon>
        <taxon>Chordata</taxon>
        <taxon>Craniata</taxon>
        <taxon>Vertebrata</taxon>
        <taxon>Euteleostomi</taxon>
        <taxon>Actinopterygii</taxon>
        <taxon>Neopterygii</taxon>
        <taxon>Teleostei</taxon>
        <taxon>Ostariophysi</taxon>
        <taxon>Cypriniformes</taxon>
        <taxon>Danionidae</taxon>
        <taxon>Danioninae</taxon>
        <taxon>Danio</taxon>
    </lineage>
</organism>
<sequence length="507" mass="54852">MALDWVGNLVSIHCGPTLGVYQGEISSVDQTSQTISLRNPFHNGVKCTVPEVTFSAMDIKDLKILEISKNSIEVSKQNGPESSSTTLMPHVGRKDKGGGGGGGGAPANSAPVMVPNKAEPRLQEGGVSPVPHYSKSYGERHIDMAVQGKGFRRRHNSWSSSCRGPNQATPKKNGLKNGGHMKNKDDECFGDGMDDVLDEDFDFEGNLALFDKAAVLSQIESSERRGNGARSRGTPGEQTPSRYRHDENILEAKPVVYRQITVPQNGSKEYSTDSGLVVPSISFELHKRLLAAAESHGLSLERRLEMTGVCASQMALTLLGGPNRLTPKNVHQRPTVALLCGPHVQGAQGISCGRHLANHEVEVVLFLPNFVKMLEAITSELALFGKTGGRLVSNVKDLPETPVDLVINCLDSHENGFLRDQPWYKAAADWANQNRAPVLSIDPPVSGQAHAVEAKWSLSLGLPLPLSEGAGRVYPCDIGIPRQVFQEVGIKYHSPFGCKFVIPLHSE</sequence>
<reference key="1">
    <citation type="submission" date="2005-05" db="EMBL/GenBank/DDBJ databases">
        <authorList>
            <consortium name="NIH - Zebrafish Gene Collection (ZGC) project"/>
        </authorList>
    </citation>
    <scope>NUCLEOTIDE SEQUENCE [LARGE SCALE MRNA]</scope>
    <source>
        <tissue>Olfactory epithelium</tissue>
    </source>
</reference>
<reference key="2">
    <citation type="journal article" date="2008" name="J. Proteome Res.">
        <title>Online automated in vivo zebrafish phosphoproteomics: from large-scale analysis down to a single embryo.</title>
        <authorList>
            <person name="Lemeer S."/>
            <person name="Pinkse M.W.H."/>
            <person name="Mohammed S."/>
            <person name="van Breukelen B."/>
            <person name="den Hertog J."/>
            <person name="Slijper M."/>
            <person name="Heck A.J.R."/>
        </authorList>
    </citation>
    <scope>PHOSPHORYLATION [LARGE SCALE ANALYSIS] AT SER-128</scope>
    <scope>IDENTIFICATION BY MASS SPECTROMETRY</scope>
    <source>
        <tissue>Embryo</tissue>
    </source>
</reference>
<proteinExistence type="evidence at protein level"/>
<gene>
    <name type="primary">edc3</name>
    <name type="synonym">lsm16</name>
    <name type="synonym">yjdc</name>
    <name type="ORF">zgc:112006</name>
</gene>
<comment type="function">
    <text evidence="2">Binds single-stranded RNA. Involved in the process of mRNA degradation and in the positive regulation of mRNA decapping (By similarity).</text>
</comment>
<comment type="subcellular location">
    <subcellularLocation>
        <location evidence="1">Cytoplasm</location>
        <location evidence="1">P-body</location>
    </subcellularLocation>
    <text evidence="1">Processing bodies (PB).</text>
</comment>
<comment type="domain">
    <text evidence="1">The DFDF domain is unstructured by itself. It assumes a helical fold upon interaction with other proteins (By similarity).</text>
</comment>
<comment type="similarity">
    <text evidence="8">Belongs to the EDC3 family.</text>
</comment>